<accession>Q5XHZ2</accession>
<comment type="function">
    <text evidence="1">Major component of the transverse central element of synaptonemal complexes (SCS), formed between homologous chromosomes during meiotic prophase. Requires SYCP1 in order to be incorporated into the central element. May have a role in the synaptonemal complex assembly, stabilization and recombination.</text>
</comment>
<comment type="subunit">
    <text evidence="1">Homodimer. Found in a complex with SYCP1 and SYCE2. Interacts with SYCP1, SYCE2 and SYCE3. Interacts with SIX6OS1.</text>
</comment>
<comment type="subcellular location">
    <subcellularLocation>
        <location evidence="1">Nucleus</location>
    </subcellularLocation>
    <subcellularLocation>
        <location evidence="1">Chromosome</location>
    </subcellularLocation>
    <text evidence="1">Associates with chromatin. In prophase I stage of meiosis, localizes in the transverse central elements of the central region between lateral elements of the synaptonemal complexes. Found only where the chromosome cores are synapsed. Colocalizes with SYCE2 in the central elements.</text>
</comment>
<comment type="similarity">
    <text evidence="4">Belongs to the SYCE family.</text>
</comment>
<comment type="sequence caution" evidence="4">
    <conflict type="erroneous initiation">
        <sequence resource="EMBL-CDS" id="AAH83907"/>
    </conflict>
    <text>Truncated N-terminus.</text>
</comment>
<proteinExistence type="evidence at transcript level"/>
<evidence type="ECO:0000250" key="1">
    <source>
        <dbReference type="UniProtKB" id="Q9D495"/>
    </source>
</evidence>
<evidence type="ECO:0000255" key="2"/>
<evidence type="ECO:0000256" key="3">
    <source>
        <dbReference type="SAM" id="MobiDB-lite"/>
    </source>
</evidence>
<evidence type="ECO:0000305" key="4"/>
<dbReference type="EMBL" id="BC083907">
    <property type="protein sequence ID" value="AAH83907.1"/>
    <property type="status" value="ALT_INIT"/>
    <property type="molecule type" value="mRNA"/>
</dbReference>
<dbReference type="RefSeq" id="NP_001020229.2">
    <property type="nucleotide sequence ID" value="NM_001025058.2"/>
</dbReference>
<dbReference type="SMR" id="Q5XHZ2"/>
<dbReference type="FunCoup" id="Q5XHZ2">
    <property type="interactions" value="28"/>
</dbReference>
<dbReference type="STRING" id="10116.ENSRNOP00000035554"/>
<dbReference type="PhosphoSitePlus" id="Q5XHZ2"/>
<dbReference type="PaxDb" id="10116-ENSRNOP00000035554"/>
<dbReference type="Ensembl" id="ENSRNOT00000033074.5">
    <property type="protein sequence ID" value="ENSRNOP00000035554.4"/>
    <property type="gene ID" value="ENSRNOG00000024073.5"/>
</dbReference>
<dbReference type="GeneID" id="502372"/>
<dbReference type="KEGG" id="rno:502372"/>
<dbReference type="UCSC" id="RGD:1559853">
    <property type="organism name" value="rat"/>
</dbReference>
<dbReference type="AGR" id="RGD:1559853"/>
<dbReference type="CTD" id="93426"/>
<dbReference type="RGD" id="1559853">
    <property type="gene designation" value="Syce1"/>
</dbReference>
<dbReference type="eggNOG" id="ENOG502S24D">
    <property type="taxonomic scope" value="Eukaryota"/>
</dbReference>
<dbReference type="GeneTree" id="ENSGT00390000017352"/>
<dbReference type="HOGENOM" id="CLU_068366_0_0_1"/>
<dbReference type="InParanoid" id="Q5XHZ2"/>
<dbReference type="OMA" id="EFHKPEQ"/>
<dbReference type="OrthoDB" id="8931744at2759"/>
<dbReference type="PhylomeDB" id="Q5XHZ2"/>
<dbReference type="TreeFam" id="TF337303"/>
<dbReference type="PRO" id="PR:Q5XHZ2"/>
<dbReference type="Proteomes" id="UP000002494">
    <property type="component" value="Chromosome 1"/>
</dbReference>
<dbReference type="Bgee" id="ENSRNOG00000024073">
    <property type="expression patterns" value="Expressed in testis and 11 other cell types or tissues"/>
</dbReference>
<dbReference type="GO" id="GO:0000801">
    <property type="term" value="C:central element"/>
    <property type="evidence" value="ECO:0000266"/>
    <property type="project" value="RGD"/>
</dbReference>
<dbReference type="GO" id="GO:0005694">
    <property type="term" value="C:chromosome"/>
    <property type="evidence" value="ECO:0000266"/>
    <property type="project" value="RGD"/>
</dbReference>
<dbReference type="GO" id="GO:0000795">
    <property type="term" value="C:synaptonemal complex"/>
    <property type="evidence" value="ECO:0000314"/>
    <property type="project" value="MGI"/>
</dbReference>
<dbReference type="GO" id="GO:0051301">
    <property type="term" value="P:cell division"/>
    <property type="evidence" value="ECO:0007669"/>
    <property type="project" value="UniProtKB-KW"/>
</dbReference>
<dbReference type="GO" id="GO:0007130">
    <property type="term" value="P:synaptonemal complex assembly"/>
    <property type="evidence" value="ECO:0007669"/>
    <property type="project" value="InterPro"/>
</dbReference>
<dbReference type="Gene3D" id="1.10.287.1490">
    <property type="match status" value="1"/>
</dbReference>
<dbReference type="InterPro" id="IPR026676">
    <property type="entry name" value="SYCE1"/>
</dbReference>
<dbReference type="PANTHER" id="PTHR21731:SF0">
    <property type="entry name" value="SYNAPTONEMAL COMPLEX CENTRAL ELEMENT PROTEIN 1"/>
    <property type="match status" value="1"/>
</dbReference>
<dbReference type="PANTHER" id="PTHR21731">
    <property type="entry name" value="SYNAPTONEMAL COMPLEX CENTRAL ELEMENT PROTEIN 1-LIKE"/>
    <property type="match status" value="1"/>
</dbReference>
<dbReference type="Pfam" id="PF15233">
    <property type="entry name" value="SYCE1"/>
    <property type="match status" value="1"/>
</dbReference>
<protein>
    <recommendedName>
        <fullName>Synaptonemal complex central element protein 1</fullName>
    </recommendedName>
</protein>
<feature type="chain" id="PRO_0000261429" description="Synaptonemal complex central element protein 1">
    <location>
        <begin position="1"/>
        <end position="329"/>
    </location>
</feature>
<feature type="region of interest" description="Disordered" evidence="3">
    <location>
        <begin position="1"/>
        <end position="33"/>
    </location>
</feature>
<feature type="region of interest" description="Disordered" evidence="3">
    <location>
        <begin position="295"/>
        <end position="329"/>
    </location>
</feature>
<feature type="coiled-coil region" evidence="2">
    <location>
        <begin position="28"/>
        <end position="168"/>
    </location>
</feature>
<feature type="coiled-coil region" evidence="2">
    <location>
        <begin position="194"/>
        <end position="294"/>
    </location>
</feature>
<feature type="compositionally biased region" description="Basic and acidic residues" evidence="3">
    <location>
        <begin position="314"/>
        <end position="329"/>
    </location>
</feature>
<keyword id="KW-0131">Cell cycle</keyword>
<keyword id="KW-0132">Cell division</keyword>
<keyword id="KW-0158">Chromosome</keyword>
<keyword id="KW-0175">Coiled coil</keyword>
<keyword id="KW-0469">Meiosis</keyword>
<keyword id="KW-0539">Nucleus</keyword>
<keyword id="KW-1185">Reference proteome</keyword>
<reference key="1">
    <citation type="journal article" date="2004" name="Genome Res.">
        <title>The status, quality, and expansion of the NIH full-length cDNA project: the Mammalian Gene Collection (MGC).</title>
        <authorList>
            <consortium name="The MGC Project Team"/>
        </authorList>
    </citation>
    <scope>NUCLEOTIDE SEQUENCE [LARGE SCALE MRNA]</scope>
    <source>
        <tissue>Testis</tissue>
    </source>
</reference>
<gene>
    <name type="primary">Syce1</name>
</gene>
<name>SYCE1_RAT</name>
<sequence>MATRPQPLSVEPEGSADLLHGPEGARGRRGSTQKIEDLMEMVEKLQKVGSLEPRIEVLINRINEVQQAKKKASEELGEAQTVWDTLQKEVDSLHEEKVRLKDILNRKEETLRIMQLHCQEKESEAERKHSMLQECKDRISFLNNQIDNEKAKLRRLRLDFEEHLETLMSQHKDTMEFHKPEHLTEEMSVLDSSKEQLLKEEKLIKAKLEDVQHRLCALCGPEGSSTFSDGLFLRSHEAAAAMQMFKDENKKAEELLEAAAQQHQQLQQRCRQLQQKRQRLKEELEKHGVQILAQIQSTQKEEDSSWRTASPKPLEAHKETVQERPSSRT</sequence>
<organism>
    <name type="scientific">Rattus norvegicus</name>
    <name type="common">Rat</name>
    <dbReference type="NCBI Taxonomy" id="10116"/>
    <lineage>
        <taxon>Eukaryota</taxon>
        <taxon>Metazoa</taxon>
        <taxon>Chordata</taxon>
        <taxon>Craniata</taxon>
        <taxon>Vertebrata</taxon>
        <taxon>Euteleostomi</taxon>
        <taxon>Mammalia</taxon>
        <taxon>Eutheria</taxon>
        <taxon>Euarchontoglires</taxon>
        <taxon>Glires</taxon>
        <taxon>Rodentia</taxon>
        <taxon>Myomorpha</taxon>
        <taxon>Muroidea</taxon>
        <taxon>Muridae</taxon>
        <taxon>Murinae</taxon>
        <taxon>Rattus</taxon>
    </lineage>
</organism>